<organism>
    <name type="scientific">Methanocaldococcus jannaschii (strain ATCC 43067 / DSM 2661 / JAL-1 / JCM 10045 / NBRC 100440)</name>
    <name type="common">Methanococcus jannaschii</name>
    <dbReference type="NCBI Taxonomy" id="243232"/>
    <lineage>
        <taxon>Archaea</taxon>
        <taxon>Methanobacteriati</taxon>
        <taxon>Methanobacteriota</taxon>
        <taxon>Methanomada group</taxon>
        <taxon>Methanococci</taxon>
        <taxon>Methanococcales</taxon>
        <taxon>Methanocaldococcaceae</taxon>
        <taxon>Methanocaldococcus</taxon>
    </lineage>
</organism>
<reference key="1">
    <citation type="journal article" date="1996" name="Science">
        <title>Complete genome sequence of the methanogenic archaeon, Methanococcus jannaschii.</title>
        <authorList>
            <person name="Bult C.J."/>
            <person name="White O."/>
            <person name="Olsen G.J."/>
            <person name="Zhou L."/>
            <person name="Fleischmann R.D."/>
            <person name="Sutton G.G."/>
            <person name="Blake J.A."/>
            <person name="FitzGerald L.M."/>
            <person name="Clayton R.A."/>
            <person name="Gocayne J.D."/>
            <person name="Kerlavage A.R."/>
            <person name="Dougherty B.A."/>
            <person name="Tomb J.-F."/>
            <person name="Adams M.D."/>
            <person name="Reich C.I."/>
            <person name="Overbeek R."/>
            <person name="Kirkness E.F."/>
            <person name="Weinstock K.G."/>
            <person name="Merrick J.M."/>
            <person name="Glodek A."/>
            <person name="Scott J.L."/>
            <person name="Geoghagen N.S.M."/>
            <person name="Weidman J.F."/>
            <person name="Fuhrmann J.L."/>
            <person name="Nguyen D."/>
            <person name="Utterback T.R."/>
            <person name="Kelley J.M."/>
            <person name="Peterson J.D."/>
            <person name="Sadow P.W."/>
            <person name="Hanna M.C."/>
            <person name="Cotton M.D."/>
            <person name="Roberts K.M."/>
            <person name="Hurst M.A."/>
            <person name="Kaine B.P."/>
            <person name="Borodovsky M."/>
            <person name="Klenk H.-P."/>
            <person name="Fraser C.M."/>
            <person name="Smith H.O."/>
            <person name="Woese C.R."/>
            <person name="Venter J.C."/>
        </authorList>
    </citation>
    <scope>NUCLEOTIDE SEQUENCE [LARGE SCALE GENOMIC DNA]</scope>
    <source>
        <strain>ATCC 43067 / DSM 2661 / JAL-1 / JCM 10045 / NBRC 100440</strain>
    </source>
</reference>
<reference key="2">
    <citation type="journal article" date="1997" name="J. Mol. Biol.">
        <title>Selenoprotein synthesis in archaea: identification of an mRNA element of Methanococcus jannaschii probably directing selenocysteine insertion.</title>
        <authorList>
            <person name="Wilting R."/>
            <person name="Schorling S."/>
            <person name="Persson B.C."/>
            <person name="Boeck A."/>
        </authorList>
    </citation>
    <scope>PROBABLE SELENOCYSTEINE AT SEC-196</scope>
</reference>
<feature type="chain" id="PRO_0000150057" description="CoB--CoM heterodisulfide reductase iron-sulfur subunit A">
    <location>
        <begin position="1"/>
        <end position="657"/>
    </location>
</feature>
<feature type="domain" description="4Fe-4S ferredoxin-type 1" evidence="4">
    <location>
        <begin position="235"/>
        <end position="266"/>
    </location>
</feature>
<feature type="domain" description="4Fe-4S ferredoxin-type 2" evidence="4">
    <location>
        <begin position="283"/>
        <end position="312"/>
    </location>
</feature>
<feature type="domain" description="4Fe-4S ferredoxin-type 3" evidence="4">
    <location>
        <begin position="574"/>
        <end position="603"/>
    </location>
</feature>
<feature type="domain" description="4Fe-4S ferredoxin-type 4" evidence="4">
    <location>
        <begin position="607"/>
        <end position="636"/>
    </location>
</feature>
<feature type="binding site" evidence="3">
    <location>
        <begin position="149"/>
        <end position="172"/>
    </location>
    <ligand>
        <name>FAD</name>
        <dbReference type="ChEBI" id="CHEBI:57692"/>
    </ligand>
</feature>
<feature type="binding site" evidence="4">
    <location>
        <position position="245"/>
    </location>
    <ligand>
        <name>[4Fe-4S] cluster</name>
        <dbReference type="ChEBI" id="CHEBI:49883"/>
        <label>1</label>
    </ligand>
</feature>
<feature type="binding site" evidence="4">
    <location>
        <position position="248"/>
    </location>
    <ligand>
        <name>[4Fe-4S] cluster</name>
        <dbReference type="ChEBI" id="CHEBI:49883"/>
        <label>1</label>
    </ligand>
</feature>
<feature type="binding site" evidence="4">
    <location>
        <position position="251"/>
    </location>
    <ligand>
        <name>[4Fe-4S] cluster</name>
        <dbReference type="ChEBI" id="CHEBI:49883"/>
        <label>1</label>
    </ligand>
</feature>
<feature type="binding site" evidence="4">
    <location>
        <position position="255"/>
    </location>
    <ligand>
        <name>[4Fe-4S] cluster</name>
        <dbReference type="ChEBI" id="CHEBI:49883"/>
        <label>2</label>
    </ligand>
</feature>
<feature type="binding site" evidence="4">
    <location>
        <position position="292"/>
    </location>
    <ligand>
        <name>[4Fe-4S] cluster</name>
        <dbReference type="ChEBI" id="CHEBI:49883"/>
        <label>2</label>
    </ligand>
</feature>
<feature type="binding site" evidence="4">
    <location>
        <position position="295"/>
    </location>
    <ligand>
        <name>[4Fe-4S] cluster</name>
        <dbReference type="ChEBI" id="CHEBI:49883"/>
        <label>2</label>
    </ligand>
</feature>
<feature type="binding site" evidence="4">
    <location>
        <position position="298"/>
    </location>
    <ligand>
        <name>[4Fe-4S] cluster</name>
        <dbReference type="ChEBI" id="CHEBI:49883"/>
        <label>2</label>
    </ligand>
</feature>
<feature type="binding site" evidence="4">
    <location>
        <position position="302"/>
    </location>
    <ligand>
        <name>[4Fe-4S] cluster</name>
        <dbReference type="ChEBI" id="CHEBI:49883"/>
        <label>1</label>
    </ligand>
</feature>
<feature type="binding site" evidence="4">
    <location>
        <position position="583"/>
    </location>
    <ligand>
        <name>[4Fe-4S] cluster</name>
        <dbReference type="ChEBI" id="CHEBI:49883"/>
        <label>3</label>
    </ligand>
</feature>
<feature type="binding site" evidence="4">
    <location>
        <position position="586"/>
    </location>
    <ligand>
        <name>[4Fe-4S] cluster</name>
        <dbReference type="ChEBI" id="CHEBI:49883"/>
        <label>3</label>
    </ligand>
</feature>
<feature type="binding site" evidence="4">
    <location>
        <position position="589"/>
    </location>
    <ligand>
        <name>[4Fe-4S] cluster</name>
        <dbReference type="ChEBI" id="CHEBI:49883"/>
        <label>3</label>
    </ligand>
</feature>
<feature type="binding site" evidence="4">
    <location>
        <position position="593"/>
    </location>
    <ligand>
        <name>[4Fe-4S] cluster</name>
        <dbReference type="ChEBI" id="CHEBI:49883"/>
        <label>4</label>
    </ligand>
</feature>
<feature type="binding site" evidence="4">
    <location>
        <position position="616"/>
    </location>
    <ligand>
        <name>[4Fe-4S] cluster</name>
        <dbReference type="ChEBI" id="CHEBI:49883"/>
        <label>4</label>
    </ligand>
</feature>
<feature type="binding site" evidence="4">
    <location>
        <position position="619"/>
    </location>
    <ligand>
        <name>[4Fe-4S] cluster</name>
        <dbReference type="ChEBI" id="CHEBI:49883"/>
        <label>4</label>
    </ligand>
</feature>
<feature type="binding site" evidence="4">
    <location>
        <position position="622"/>
    </location>
    <ligand>
        <name>[4Fe-4S] cluster</name>
        <dbReference type="ChEBI" id="CHEBI:49883"/>
        <label>4</label>
    </ligand>
</feature>
<feature type="binding site" evidence="4">
    <location>
        <position position="626"/>
    </location>
    <ligand>
        <name>[4Fe-4S] cluster</name>
        <dbReference type="ChEBI" id="CHEBI:49883"/>
        <label>3</label>
    </ligand>
</feature>
<feature type="non-standard amino acid" description="Selenocysteine" evidence="5">
    <location>
        <position position="196"/>
    </location>
</feature>
<gene>
    <name type="primary">hdrA</name>
    <name type="ordered locus">MJ1190</name>
</gene>
<name>HDRA_METJA</name>
<keyword id="KW-0004">4Fe-4S</keyword>
<keyword id="KW-0274">FAD</keyword>
<keyword id="KW-0285">Flavoprotein</keyword>
<keyword id="KW-0408">Iron</keyword>
<keyword id="KW-0411">Iron-sulfur</keyword>
<keyword id="KW-0479">Metal-binding</keyword>
<keyword id="KW-0484">Methanogenesis</keyword>
<keyword id="KW-0560">Oxidoreductase</keyword>
<keyword id="KW-1185">Reference proteome</keyword>
<keyword id="KW-0677">Repeat</keyword>
<keyword id="KW-0712">Selenocysteine</keyword>
<dbReference type="EC" id="1.8.98.-" evidence="5"/>
<dbReference type="EMBL" id="L77117">
    <property type="status" value="NOT_ANNOTATED_CDS"/>
    <property type="molecule type" value="Genomic_DNA"/>
</dbReference>
<dbReference type="RefSeq" id="WP_162484757.1">
    <property type="nucleotide sequence ID" value="NC_000909.1"/>
</dbReference>
<dbReference type="FunCoup" id="P60200">
    <property type="interactions" value="2"/>
</dbReference>
<dbReference type="GeneID" id="1452597"/>
<dbReference type="InParanoid" id="P60200"/>
<dbReference type="OrthoDB" id="32867at2157"/>
<dbReference type="PhylomeDB" id="P60200"/>
<dbReference type="UniPathway" id="UPA00647">
    <property type="reaction ID" value="UER00700"/>
</dbReference>
<dbReference type="Proteomes" id="UP000000805">
    <property type="component" value="Chromosome"/>
</dbReference>
<dbReference type="GO" id="GO:0051539">
    <property type="term" value="F:4 iron, 4 sulfur cluster binding"/>
    <property type="evidence" value="ECO:0007669"/>
    <property type="project" value="UniProtKB-KW"/>
</dbReference>
<dbReference type="GO" id="GO:0051912">
    <property type="term" value="F:CoB--CoM heterodisulfide reductase activity"/>
    <property type="evidence" value="ECO:0000314"/>
    <property type="project" value="MENGO"/>
</dbReference>
<dbReference type="GO" id="GO:0046872">
    <property type="term" value="F:metal ion binding"/>
    <property type="evidence" value="ECO:0007669"/>
    <property type="project" value="UniProtKB-KW"/>
</dbReference>
<dbReference type="GO" id="GO:0015948">
    <property type="term" value="P:methanogenesis"/>
    <property type="evidence" value="ECO:0007669"/>
    <property type="project" value="UniProtKB-KW"/>
</dbReference>
<dbReference type="FunFam" id="3.30.70.20:FF:000076">
    <property type="entry name" value="CoB--CoM heterodisulfide reductase iron-sulfur subunit A"/>
    <property type="match status" value="1"/>
</dbReference>
<dbReference type="Gene3D" id="3.30.70.20">
    <property type="match status" value="3"/>
</dbReference>
<dbReference type="Gene3D" id="3.40.50.720">
    <property type="entry name" value="NAD(P)-binding Rossmann-like Domain"/>
    <property type="match status" value="1"/>
</dbReference>
<dbReference type="InterPro" id="IPR017896">
    <property type="entry name" value="4Fe4S_Fe-S-bd"/>
</dbReference>
<dbReference type="InterPro" id="IPR017900">
    <property type="entry name" value="4Fe4S_Fe_S_CS"/>
</dbReference>
<dbReference type="InterPro" id="IPR036188">
    <property type="entry name" value="FAD/NAD-bd_sf"/>
</dbReference>
<dbReference type="InterPro" id="IPR039650">
    <property type="entry name" value="HdrA-like"/>
</dbReference>
<dbReference type="PANTHER" id="PTHR43498:SF1">
    <property type="entry name" value="COB--COM HETERODISULFIDE REDUCTASE IRON-SULFUR SUBUNIT A"/>
    <property type="match status" value="1"/>
</dbReference>
<dbReference type="PANTHER" id="PTHR43498">
    <property type="entry name" value="FERREDOXIN:COB-COM HETERODISULFIDE REDUCTASE SUBUNIT A"/>
    <property type="match status" value="1"/>
</dbReference>
<dbReference type="Pfam" id="PF12831">
    <property type="entry name" value="FAD_oxidored"/>
    <property type="match status" value="1"/>
</dbReference>
<dbReference type="Pfam" id="PF14697">
    <property type="entry name" value="Fer4_21"/>
    <property type="match status" value="1"/>
</dbReference>
<dbReference type="Pfam" id="PF13187">
    <property type="entry name" value="Fer4_9"/>
    <property type="match status" value="1"/>
</dbReference>
<dbReference type="SUPFAM" id="SSF54862">
    <property type="entry name" value="4Fe-4S ferredoxins"/>
    <property type="match status" value="1"/>
</dbReference>
<dbReference type="SUPFAM" id="SSF51905">
    <property type="entry name" value="FAD/NAD(P)-binding domain"/>
    <property type="match status" value="1"/>
</dbReference>
<dbReference type="PROSITE" id="PS00198">
    <property type="entry name" value="4FE4S_FER_1"/>
    <property type="match status" value="4"/>
</dbReference>
<dbReference type="PROSITE" id="PS51379">
    <property type="entry name" value="4FE4S_FER_2"/>
    <property type="match status" value="4"/>
</dbReference>
<protein>
    <recommendedName>
        <fullName evidence="5">CoB--CoM heterodisulfide reductase iron-sulfur subunit A</fullName>
        <ecNumber evidence="5">1.8.98.-</ecNumber>
    </recommendedName>
</protein>
<proteinExistence type="inferred from homology"/>
<comment type="function">
    <text evidence="1">Part of a complex that catalyzes the reversible reduction of CoM-S-S-CoB to the thiol-coenzymes H-S-CoM (coenzyme M) and H-S-CoB (coenzyme B).</text>
</comment>
<comment type="cofactor">
    <cofactor evidence="4">
        <name>[4Fe-4S] cluster</name>
        <dbReference type="ChEBI" id="CHEBI:49883"/>
    </cofactor>
    <text evidence="4">Binds 4 [4Fe-4S] clusters per subunit.</text>
</comment>
<comment type="cofactor">
    <cofactor evidence="2">
        <name>FAD</name>
        <dbReference type="ChEBI" id="CHEBI:57692"/>
    </cofactor>
</comment>
<comment type="pathway">
    <text evidence="1">Cofactor metabolism; coenzyme M-coenzyme B heterodisulfide reduction; coenzyme B and coenzyme M from coenzyme M-coenzyme B heterodisulfide: step 1/1.</text>
</comment>
<comment type="subunit">
    <text evidence="1">The ferredoxin:CoB-CoM heterodisulfide reductase is composed of three subunits; HdrA, HdrB and HdrC.</text>
</comment>
<comment type="similarity">
    <text evidence="5">Belongs to the HdrA family.</text>
</comment>
<accession>P60200</accession>
<evidence type="ECO:0000250" key="1">
    <source>
        <dbReference type="UniProtKB" id="Q6LWL2"/>
    </source>
</evidence>
<evidence type="ECO:0000250" key="2">
    <source>
        <dbReference type="UniProtKB" id="Q8TM02"/>
    </source>
</evidence>
<evidence type="ECO:0000255" key="3"/>
<evidence type="ECO:0000255" key="4">
    <source>
        <dbReference type="PROSITE-ProRule" id="PRU00711"/>
    </source>
</evidence>
<evidence type="ECO:0000305" key="5"/>
<sequence>MSPRVGVFVCYCGANINGVVDCEAVRDFAEKLDGVVVAKTYPFMCADPGQNLIKEAIKEYNLDRVVVAACTPKIHEPTFRNCIKEAGLSPYYLEFVNIREHCSFVHMNDREKATKKAMELVAGAVERAKRLEDVPQKIVEVDKSCLIIGGGIAGIQAALDLGDQGYKVYLVEKEPSIGGRMAQLAKTFPTDDCALUILAPKMVSVANHPNVELITYAEVKNVEGFIGNFEVTIEKKPRYVDENICTGCGACAAVCPIEVPNEFDLGLGTRKAIYVPFAQAVPLVYTIDMDHCIRCGLCEKACGPGAIRYDQKPEEIKLKVGTIICAVGYDEFDATLKEEYGYGVYDNVITTLELERMINPAGPTGGHEIRPSDGKHPHRVVFIQCVGSRDAKVGKHYCSRICCMFALKNAQLIKQHDPSTEVYICYMDIRSFGKGYEEYYRRAQEQFGVKFIRGRPACIMEDPETKNLIVRVEDTLLGEIVEIEADLVVLSAGLSPRPDNPKLAKMLGLELSPDGFFKELHPKLAPVNTKVDGIAIAGVAQGPKDIPDTVAQAKGAASAVSIPMAQGQFRIEMIRAVVDEDVCGGCQVCAKMCPYNAITYVEKDGHLVAQVNDVACKGCGSCAGACPSGAMQLRYYRDEQIISFIDGVLEAHQKLES</sequence>